<dbReference type="EC" id="2.7.1.-" evidence="1"/>
<dbReference type="EMBL" id="BA000017">
    <property type="protein sequence ID" value="BAB56354.1"/>
    <property type="molecule type" value="Genomic_DNA"/>
</dbReference>
<dbReference type="RefSeq" id="WP_000159750.1">
    <property type="nucleotide sequence ID" value="NC_002758.2"/>
</dbReference>
<dbReference type="SMR" id="Q99X29"/>
<dbReference type="KEGG" id="sav:SAV0192"/>
<dbReference type="HOGENOM" id="CLU_012312_2_0_9"/>
<dbReference type="PhylomeDB" id="Q99X29"/>
<dbReference type="UniPathway" id="UPA00544"/>
<dbReference type="Proteomes" id="UP000002481">
    <property type="component" value="Chromosome"/>
</dbReference>
<dbReference type="GO" id="GO:0005886">
    <property type="term" value="C:plasma membrane"/>
    <property type="evidence" value="ECO:0007669"/>
    <property type="project" value="UniProtKB-SubCell"/>
</dbReference>
<dbReference type="GO" id="GO:0016301">
    <property type="term" value="F:kinase activity"/>
    <property type="evidence" value="ECO:0007669"/>
    <property type="project" value="UniProtKB-KW"/>
</dbReference>
<dbReference type="GO" id="GO:0008982">
    <property type="term" value="F:protein-N(PI)-phosphohistidine-sugar phosphotransferase activity"/>
    <property type="evidence" value="ECO:0007669"/>
    <property type="project" value="InterPro"/>
</dbReference>
<dbReference type="GO" id="GO:0090588">
    <property type="term" value="F:protein-phosphocysteine-N-acetylmuramate phosphotransferase system transporter activity"/>
    <property type="evidence" value="ECO:0007669"/>
    <property type="project" value="TreeGrafter"/>
</dbReference>
<dbReference type="GO" id="GO:0009254">
    <property type="term" value="P:peptidoglycan turnover"/>
    <property type="evidence" value="ECO:0007669"/>
    <property type="project" value="UniProtKB-UniPathway"/>
</dbReference>
<dbReference type="GO" id="GO:0009401">
    <property type="term" value="P:phosphoenolpyruvate-dependent sugar phosphotransferase system"/>
    <property type="evidence" value="ECO:0007669"/>
    <property type="project" value="UniProtKB-KW"/>
</dbReference>
<dbReference type="CDD" id="cd00212">
    <property type="entry name" value="PTS_IIB_glc"/>
    <property type="match status" value="1"/>
</dbReference>
<dbReference type="FunFam" id="3.30.1360.60:FF:000001">
    <property type="entry name" value="PTS system glucose-specific IIBC component PtsG"/>
    <property type="match status" value="1"/>
</dbReference>
<dbReference type="Gene3D" id="3.30.1360.60">
    <property type="entry name" value="Glucose permease domain IIB"/>
    <property type="match status" value="1"/>
</dbReference>
<dbReference type="InterPro" id="IPR036878">
    <property type="entry name" value="Glu_permease_IIB"/>
</dbReference>
<dbReference type="InterPro" id="IPR018113">
    <property type="entry name" value="PTrfase_EIIB_Cys"/>
</dbReference>
<dbReference type="InterPro" id="IPR003352">
    <property type="entry name" value="PTS_EIIC"/>
</dbReference>
<dbReference type="InterPro" id="IPR013013">
    <property type="entry name" value="PTS_EIIC_1"/>
</dbReference>
<dbReference type="InterPro" id="IPR001996">
    <property type="entry name" value="PTS_IIB_1"/>
</dbReference>
<dbReference type="InterPro" id="IPR050558">
    <property type="entry name" value="PTS_Sugar-Specific_Components"/>
</dbReference>
<dbReference type="PANTHER" id="PTHR30175">
    <property type="entry name" value="PHOSPHOTRANSFERASE SYSTEM TRANSPORT PROTEIN"/>
    <property type="match status" value="1"/>
</dbReference>
<dbReference type="PANTHER" id="PTHR30175:SF3">
    <property type="entry name" value="PTS SYSTEM N-ACETYLMURAMIC ACID-SPECIFIC EIIBC COMPONENT"/>
    <property type="match status" value="1"/>
</dbReference>
<dbReference type="Pfam" id="PF00367">
    <property type="entry name" value="PTS_EIIB"/>
    <property type="match status" value="1"/>
</dbReference>
<dbReference type="Pfam" id="PF02378">
    <property type="entry name" value="PTS_EIIC"/>
    <property type="match status" value="1"/>
</dbReference>
<dbReference type="SUPFAM" id="SSF55604">
    <property type="entry name" value="Glucose permease domain IIB"/>
    <property type="match status" value="1"/>
</dbReference>
<dbReference type="PROSITE" id="PS51098">
    <property type="entry name" value="PTS_EIIB_TYPE_1"/>
    <property type="match status" value="1"/>
</dbReference>
<dbReference type="PROSITE" id="PS01035">
    <property type="entry name" value="PTS_EIIB_TYPE_1_CYS"/>
    <property type="match status" value="1"/>
</dbReference>
<dbReference type="PROSITE" id="PS51103">
    <property type="entry name" value="PTS_EIIC_TYPE_1"/>
    <property type="match status" value="1"/>
</dbReference>
<gene>
    <name type="ordered locus">SAV0192</name>
</gene>
<proteinExistence type="inferred from homology"/>
<accession>Q99X29</accession>
<keyword id="KW-1003">Cell membrane</keyword>
<keyword id="KW-0418">Kinase</keyword>
<keyword id="KW-0472">Membrane</keyword>
<keyword id="KW-0598">Phosphotransferase system</keyword>
<keyword id="KW-0762">Sugar transport</keyword>
<keyword id="KW-0808">Transferase</keyword>
<keyword id="KW-0812">Transmembrane</keyword>
<keyword id="KW-1133">Transmembrane helix</keyword>
<keyword id="KW-0813">Transport</keyword>
<reference key="1">
    <citation type="journal article" date="2001" name="Lancet">
        <title>Whole genome sequencing of meticillin-resistant Staphylococcus aureus.</title>
        <authorList>
            <person name="Kuroda M."/>
            <person name="Ohta T."/>
            <person name="Uchiyama I."/>
            <person name="Baba T."/>
            <person name="Yuzawa H."/>
            <person name="Kobayashi I."/>
            <person name="Cui L."/>
            <person name="Oguchi A."/>
            <person name="Aoki K."/>
            <person name="Nagai Y."/>
            <person name="Lian J.-Q."/>
            <person name="Ito T."/>
            <person name="Kanamori M."/>
            <person name="Matsumaru H."/>
            <person name="Maruyama A."/>
            <person name="Murakami H."/>
            <person name="Hosoyama A."/>
            <person name="Mizutani-Ui Y."/>
            <person name="Takahashi N.K."/>
            <person name="Sawano T."/>
            <person name="Inoue R."/>
            <person name="Kaito C."/>
            <person name="Sekimizu K."/>
            <person name="Hirakawa H."/>
            <person name="Kuhara S."/>
            <person name="Goto S."/>
            <person name="Yabuzaki J."/>
            <person name="Kanehisa M."/>
            <person name="Yamashita A."/>
            <person name="Oshima K."/>
            <person name="Furuya K."/>
            <person name="Yoshino C."/>
            <person name="Shiba T."/>
            <person name="Hattori M."/>
            <person name="Ogasawara N."/>
            <person name="Hayashi H."/>
            <person name="Hiramatsu K."/>
        </authorList>
    </citation>
    <scope>NUCLEOTIDE SEQUENCE [LARGE SCALE GENOMIC DNA]</scope>
    <source>
        <strain>Mu50 / ATCC 700699</strain>
    </source>
</reference>
<feature type="chain" id="PRO_0000272176" description="PTS system MurNAc-GlcNAc-specific EIIBC component">
    <location>
        <begin position="1"/>
        <end position="484"/>
    </location>
</feature>
<feature type="transmembrane region" description="Helical" evidence="3">
    <location>
        <begin position="135"/>
        <end position="155"/>
    </location>
</feature>
<feature type="transmembrane region" description="Helical" evidence="3">
    <location>
        <begin position="160"/>
        <end position="180"/>
    </location>
</feature>
<feature type="transmembrane region" description="Helical" evidence="3">
    <location>
        <begin position="200"/>
        <end position="220"/>
    </location>
</feature>
<feature type="transmembrane region" description="Helical" evidence="3">
    <location>
        <begin position="234"/>
        <end position="254"/>
    </location>
</feature>
<feature type="transmembrane region" description="Helical" evidence="3">
    <location>
        <begin position="274"/>
        <end position="294"/>
    </location>
</feature>
<feature type="transmembrane region" description="Helical" evidence="3">
    <location>
        <begin position="305"/>
        <end position="325"/>
    </location>
</feature>
<feature type="transmembrane region" description="Helical" evidence="3">
    <location>
        <begin position="349"/>
        <end position="369"/>
    </location>
</feature>
<feature type="transmembrane region" description="Helical" evidence="3">
    <location>
        <begin position="384"/>
        <end position="404"/>
    </location>
</feature>
<feature type="transmembrane region" description="Helical" evidence="3">
    <location>
        <begin position="408"/>
        <end position="428"/>
    </location>
</feature>
<feature type="transmembrane region" description="Helical" evidence="3">
    <location>
        <begin position="450"/>
        <end position="470"/>
    </location>
</feature>
<feature type="domain" description="PTS EIIB type-1" evidence="2">
    <location>
        <begin position="5"/>
        <end position="87"/>
    </location>
</feature>
<feature type="domain" description="PTS EIIC type-1" evidence="3">
    <location>
        <begin position="130"/>
        <end position="484"/>
    </location>
</feature>
<feature type="active site" description="Phosphocysteine intermediate; for EIIB activity" evidence="2">
    <location>
        <position position="27"/>
    </location>
</feature>
<name>PTXBC_STAAM</name>
<protein>
    <recommendedName>
        <fullName evidence="1">PTS system MurNAc-GlcNAc-specific EIIBC component</fullName>
    </recommendedName>
    <domain>
        <recommendedName>
            <fullName>MurNAc-GlcNAc-specific phosphotransferase enzyme IIB component</fullName>
            <ecNumber evidence="1">2.7.1.-</ecNumber>
        </recommendedName>
        <alternativeName>
            <fullName>PTS system MurNAc-GlcNAc-specific EIIB component</fullName>
        </alternativeName>
    </domain>
    <domain>
        <recommendedName>
            <fullName>MurNAc-GlcNAc permease IIC component</fullName>
        </recommendedName>
        <alternativeName>
            <fullName>PTS system MurNAc-GlcNAc-specific EIIC component</fullName>
        </alternativeName>
    </domain>
</protein>
<comment type="function">
    <text evidence="1">The phosphoenolpyruvate-dependent sugar phosphotransferase system (sugar PTS), a major carbohydrate active transport system, catalyzes the phosphorylation of incoming sugar substrates concomitantly with their translocation across the cell membrane. This system is involved in the uptake and phosphorylation of MurNAc-GlcNAc, the principle peptidoglycan turnover product of S.aureus, yielding cytoplasmic MurNAc 6P-GlcNAc.</text>
</comment>
<comment type="catalytic activity">
    <reaction evidence="1">
        <text>N-acetyl-beta-D-muramate-(1-&gt;4)-N-acetyl-D-glucosamine(out) + N(pros)-phospho-L-histidyl-[protein] = 6-phospho-N-acetyl-beta-D-muramate-(1-&gt;4)-N-acetyl-D-glucosamine(in) + L-histidyl-[protein]</text>
        <dbReference type="Rhea" id="RHEA:66784"/>
        <dbReference type="Rhea" id="RHEA-COMP:9745"/>
        <dbReference type="Rhea" id="RHEA-COMP:9746"/>
        <dbReference type="ChEBI" id="CHEBI:29979"/>
        <dbReference type="ChEBI" id="CHEBI:64837"/>
        <dbReference type="ChEBI" id="CHEBI:167476"/>
        <dbReference type="ChEBI" id="CHEBI:167477"/>
    </reaction>
    <physiologicalReaction direction="left-to-right" evidence="1">
        <dbReference type="Rhea" id="RHEA:66785"/>
    </physiologicalReaction>
</comment>
<comment type="pathway">
    <text evidence="1">Cell wall biogenesis; peptidoglycan recycling.</text>
</comment>
<comment type="subcellular location">
    <subcellularLocation>
        <location evidence="3">Cell membrane</location>
        <topology evidence="3">Multi-pass membrane protein</topology>
    </subcellularLocation>
</comment>
<comment type="domain">
    <text>The EIIB domain is phosphorylated by phospho-EIIA on a cysteinyl or histidyl residue, depending on the transported sugar. Then, it transfers the phosphoryl group to the sugar substrate concomitantly with the sugar uptake processed by the EIIC domain.</text>
</comment>
<comment type="domain">
    <text>The EIIC domain forms the PTS system translocation channel and contains the specific substrate-binding site.</text>
</comment>
<organism>
    <name type="scientific">Staphylococcus aureus (strain Mu50 / ATCC 700699)</name>
    <dbReference type="NCBI Taxonomy" id="158878"/>
    <lineage>
        <taxon>Bacteria</taxon>
        <taxon>Bacillati</taxon>
        <taxon>Bacillota</taxon>
        <taxon>Bacilli</taxon>
        <taxon>Bacillales</taxon>
        <taxon>Staphylococcaceae</taxon>
        <taxon>Staphylococcus</taxon>
    </lineage>
</organism>
<evidence type="ECO:0000250" key="1">
    <source>
        <dbReference type="UniProtKB" id="Q2FK70"/>
    </source>
</evidence>
<evidence type="ECO:0000255" key="2">
    <source>
        <dbReference type="PROSITE-ProRule" id="PRU00421"/>
    </source>
</evidence>
<evidence type="ECO:0000255" key="3">
    <source>
        <dbReference type="PROSITE-ProRule" id="PRU00426"/>
    </source>
</evidence>
<sequence>MTKEQQLAERIIAAVGGMDNIDSVMNCMTRVRIKVLDENKVDDQELRHIDGVMGVIHDERIQVVVGPGTVNKVANHMAELSGVKLGDPIPHHHNDSEKMDYKSYAADKAKANKEAHKAKQKNGKLNKVLKSIANIFIPLIPAFIGAGLIGGIAAVLSNLMVAGYISGAWITQLITVFNVIKDGMLAYLAIFTGINAAKEFGATPGLGGVIGGTTLLTGIAGKNILMNVFTGEPLQPGQGGIIGVIFAVWILSIVEKRLHKIVPNAIDIIVTPTIALLIVGLLTIFIFMPLAGFVSDSLVSVVNGIISIGGVFSGFIIGASFLPLVMLGLHHIFTPIHIEMINQSGATYLLPIAAMAGAGQVGAALALWVRCKRNTTLRNTLKGALPVGFLGIGEPLIYGVTLPLGRPFLTACIGGGIGGAVIGGIGHIGAKAIGPSGVSLLPLISDNMYLGYIAGLLAAYAGGFVCTYLFGTTKAMRQTDLLGD</sequence>